<proteinExistence type="inferred from homology"/>
<name>MURA_DECAR</name>
<dbReference type="EC" id="2.5.1.7" evidence="1"/>
<dbReference type="EMBL" id="CP000089">
    <property type="protein sequence ID" value="AAZ48122.1"/>
    <property type="molecule type" value="Genomic_DNA"/>
</dbReference>
<dbReference type="SMR" id="Q47AK9"/>
<dbReference type="STRING" id="159087.Daro_3393"/>
<dbReference type="KEGG" id="dar:Daro_3393"/>
<dbReference type="eggNOG" id="COG0766">
    <property type="taxonomic scope" value="Bacteria"/>
</dbReference>
<dbReference type="HOGENOM" id="CLU_027387_0_0_4"/>
<dbReference type="OrthoDB" id="9803760at2"/>
<dbReference type="UniPathway" id="UPA00219"/>
<dbReference type="GO" id="GO:0005737">
    <property type="term" value="C:cytoplasm"/>
    <property type="evidence" value="ECO:0007669"/>
    <property type="project" value="UniProtKB-SubCell"/>
</dbReference>
<dbReference type="GO" id="GO:0008760">
    <property type="term" value="F:UDP-N-acetylglucosamine 1-carboxyvinyltransferase activity"/>
    <property type="evidence" value="ECO:0007669"/>
    <property type="project" value="UniProtKB-UniRule"/>
</dbReference>
<dbReference type="GO" id="GO:0051301">
    <property type="term" value="P:cell division"/>
    <property type="evidence" value="ECO:0007669"/>
    <property type="project" value="UniProtKB-KW"/>
</dbReference>
<dbReference type="GO" id="GO:0071555">
    <property type="term" value="P:cell wall organization"/>
    <property type="evidence" value="ECO:0007669"/>
    <property type="project" value="UniProtKB-KW"/>
</dbReference>
<dbReference type="GO" id="GO:0009252">
    <property type="term" value="P:peptidoglycan biosynthetic process"/>
    <property type="evidence" value="ECO:0007669"/>
    <property type="project" value="UniProtKB-UniRule"/>
</dbReference>
<dbReference type="GO" id="GO:0008360">
    <property type="term" value="P:regulation of cell shape"/>
    <property type="evidence" value="ECO:0007669"/>
    <property type="project" value="UniProtKB-KW"/>
</dbReference>
<dbReference type="GO" id="GO:0019277">
    <property type="term" value="P:UDP-N-acetylgalactosamine biosynthetic process"/>
    <property type="evidence" value="ECO:0007669"/>
    <property type="project" value="InterPro"/>
</dbReference>
<dbReference type="CDD" id="cd01555">
    <property type="entry name" value="UdpNAET"/>
    <property type="match status" value="1"/>
</dbReference>
<dbReference type="FunFam" id="3.65.10.10:FF:000001">
    <property type="entry name" value="UDP-N-acetylglucosamine 1-carboxyvinyltransferase"/>
    <property type="match status" value="1"/>
</dbReference>
<dbReference type="Gene3D" id="3.65.10.10">
    <property type="entry name" value="Enolpyruvate transferase domain"/>
    <property type="match status" value="2"/>
</dbReference>
<dbReference type="HAMAP" id="MF_00111">
    <property type="entry name" value="MurA"/>
    <property type="match status" value="1"/>
</dbReference>
<dbReference type="InterPro" id="IPR001986">
    <property type="entry name" value="Enolpyruvate_Tfrase_dom"/>
</dbReference>
<dbReference type="InterPro" id="IPR036968">
    <property type="entry name" value="Enolpyruvate_Tfrase_sf"/>
</dbReference>
<dbReference type="InterPro" id="IPR050068">
    <property type="entry name" value="MurA_subfamily"/>
</dbReference>
<dbReference type="InterPro" id="IPR013792">
    <property type="entry name" value="RNA3'P_cycl/enolpyr_Trfase_a/b"/>
</dbReference>
<dbReference type="InterPro" id="IPR005750">
    <property type="entry name" value="UDP_GlcNAc_COvinyl_MurA"/>
</dbReference>
<dbReference type="NCBIfam" id="TIGR01072">
    <property type="entry name" value="murA"/>
    <property type="match status" value="1"/>
</dbReference>
<dbReference type="NCBIfam" id="NF006873">
    <property type="entry name" value="PRK09369.1"/>
    <property type="match status" value="1"/>
</dbReference>
<dbReference type="PANTHER" id="PTHR43783">
    <property type="entry name" value="UDP-N-ACETYLGLUCOSAMINE 1-CARBOXYVINYLTRANSFERASE"/>
    <property type="match status" value="1"/>
</dbReference>
<dbReference type="PANTHER" id="PTHR43783:SF1">
    <property type="entry name" value="UDP-N-ACETYLGLUCOSAMINE 1-CARBOXYVINYLTRANSFERASE"/>
    <property type="match status" value="1"/>
</dbReference>
<dbReference type="Pfam" id="PF00275">
    <property type="entry name" value="EPSP_synthase"/>
    <property type="match status" value="1"/>
</dbReference>
<dbReference type="SUPFAM" id="SSF55205">
    <property type="entry name" value="EPT/RTPC-like"/>
    <property type="match status" value="1"/>
</dbReference>
<organism>
    <name type="scientific">Dechloromonas aromatica (strain RCB)</name>
    <dbReference type="NCBI Taxonomy" id="159087"/>
    <lineage>
        <taxon>Bacteria</taxon>
        <taxon>Pseudomonadati</taxon>
        <taxon>Pseudomonadota</taxon>
        <taxon>Betaproteobacteria</taxon>
        <taxon>Rhodocyclales</taxon>
        <taxon>Azonexaceae</taxon>
        <taxon>Dechloromonas</taxon>
    </lineage>
</organism>
<protein>
    <recommendedName>
        <fullName evidence="1">UDP-N-acetylglucosamine 1-carboxyvinyltransferase</fullName>
        <ecNumber evidence="1">2.5.1.7</ecNumber>
    </recommendedName>
    <alternativeName>
        <fullName evidence="1">Enoylpyruvate transferase</fullName>
    </alternativeName>
    <alternativeName>
        <fullName evidence="1">UDP-N-acetylglucosamine enolpyruvyl transferase</fullName>
        <shortName evidence="1">EPT</shortName>
    </alternativeName>
</protein>
<accession>Q47AK9</accession>
<comment type="function">
    <text evidence="1">Cell wall formation. Adds enolpyruvyl to UDP-N-acetylglucosamine.</text>
</comment>
<comment type="catalytic activity">
    <reaction evidence="1">
        <text>phosphoenolpyruvate + UDP-N-acetyl-alpha-D-glucosamine = UDP-N-acetyl-3-O-(1-carboxyvinyl)-alpha-D-glucosamine + phosphate</text>
        <dbReference type="Rhea" id="RHEA:18681"/>
        <dbReference type="ChEBI" id="CHEBI:43474"/>
        <dbReference type="ChEBI" id="CHEBI:57705"/>
        <dbReference type="ChEBI" id="CHEBI:58702"/>
        <dbReference type="ChEBI" id="CHEBI:68483"/>
        <dbReference type="EC" id="2.5.1.7"/>
    </reaction>
</comment>
<comment type="pathway">
    <text evidence="1">Cell wall biogenesis; peptidoglycan biosynthesis.</text>
</comment>
<comment type="subcellular location">
    <subcellularLocation>
        <location evidence="1">Cytoplasm</location>
    </subcellularLocation>
</comment>
<comment type="similarity">
    <text evidence="1">Belongs to the EPSP synthase family. MurA subfamily.</text>
</comment>
<feature type="chain" id="PRO_0000231198" description="UDP-N-acetylglucosamine 1-carboxyvinyltransferase">
    <location>
        <begin position="1"/>
        <end position="417"/>
    </location>
</feature>
<feature type="active site" description="Proton donor" evidence="1">
    <location>
        <position position="117"/>
    </location>
</feature>
<feature type="binding site" evidence="1">
    <location>
        <begin position="22"/>
        <end position="23"/>
    </location>
    <ligand>
        <name>phosphoenolpyruvate</name>
        <dbReference type="ChEBI" id="CHEBI:58702"/>
    </ligand>
</feature>
<feature type="binding site" evidence="1">
    <location>
        <position position="93"/>
    </location>
    <ligand>
        <name>UDP-N-acetyl-alpha-D-glucosamine</name>
        <dbReference type="ChEBI" id="CHEBI:57705"/>
    </ligand>
</feature>
<feature type="binding site" evidence="1">
    <location>
        <begin position="122"/>
        <end position="126"/>
    </location>
    <ligand>
        <name>UDP-N-acetyl-alpha-D-glucosamine</name>
        <dbReference type="ChEBI" id="CHEBI:57705"/>
    </ligand>
</feature>
<feature type="binding site" evidence="1">
    <location>
        <position position="305"/>
    </location>
    <ligand>
        <name>UDP-N-acetyl-alpha-D-glucosamine</name>
        <dbReference type="ChEBI" id="CHEBI:57705"/>
    </ligand>
</feature>
<feature type="binding site" evidence="1">
    <location>
        <position position="327"/>
    </location>
    <ligand>
        <name>UDP-N-acetyl-alpha-D-glucosamine</name>
        <dbReference type="ChEBI" id="CHEBI:57705"/>
    </ligand>
</feature>
<feature type="modified residue" description="2-(S-cysteinyl)pyruvic acid O-phosphothioketal" evidence="1">
    <location>
        <position position="117"/>
    </location>
</feature>
<evidence type="ECO:0000255" key="1">
    <source>
        <dbReference type="HAMAP-Rule" id="MF_00111"/>
    </source>
</evidence>
<sequence>MDKLLIEGGKVLSGEVAMSGAKNAALPILCASLLTSDPVHFTNVPHLNDISTMLRLLGDMGVGVTMDGIDGIVLNGGGLNNPVASYEMVKTMRASILVLGPLVARCGEARVSLPGGCAIGARPVDQHIKGLQAMGAEVKVEQGYVHAKATRLKGARICTDMVTVTGTENLMMAACLAEGETVIENAAREPEVVDLANCLVSMGARISGAGTDVIRIQGVDKLHGATHAIMPDRIETGTYLCAAAATGGDIRLLKTSAAYLDTVVDKLMDAGCEITVERDAIRLVAPKRLKAVSLRTAPYPAFPTDMQAQFMAINCIADGVATIRETIFENRFMHVNELMRLGANIQIEGNNAIVRGVDRLEGATVMATDLRASASLVIAGLVAQGETVIDRIYHLDRGYERIEEKLAKLGAAVRRVH</sequence>
<reference key="1">
    <citation type="journal article" date="2009" name="BMC Genomics">
        <title>Metabolic analysis of the soil microbe Dechloromonas aromatica str. RCB: indications of a surprisingly complex life-style and cryptic anaerobic pathways for aromatic degradation.</title>
        <authorList>
            <person name="Salinero K.K."/>
            <person name="Keller K."/>
            <person name="Feil W.S."/>
            <person name="Feil H."/>
            <person name="Trong S."/>
            <person name="Di Bartolo G."/>
            <person name="Lapidus A."/>
        </authorList>
    </citation>
    <scope>NUCLEOTIDE SEQUENCE [LARGE SCALE GENOMIC DNA]</scope>
    <source>
        <strain>RCB</strain>
    </source>
</reference>
<gene>
    <name evidence="1" type="primary">murA</name>
    <name type="ordered locus">Daro_3393</name>
</gene>
<keyword id="KW-0131">Cell cycle</keyword>
<keyword id="KW-0132">Cell division</keyword>
<keyword id="KW-0133">Cell shape</keyword>
<keyword id="KW-0961">Cell wall biogenesis/degradation</keyword>
<keyword id="KW-0963">Cytoplasm</keyword>
<keyword id="KW-0573">Peptidoglycan synthesis</keyword>
<keyword id="KW-0670">Pyruvate</keyword>
<keyword id="KW-0808">Transferase</keyword>